<accession>A5UID3</accession>
<gene>
    <name evidence="1" type="primary">rnpA</name>
    <name type="ordered locus">CGSHiGG_08595</name>
</gene>
<feature type="chain" id="PRO_1000021411" description="Ribonuclease P protein component">
    <location>
        <begin position="1"/>
        <end position="119"/>
    </location>
</feature>
<sequence length="119" mass="14081">MVKLNFSRELRLLTPIQFKNVFEQPFRASTPEITILARKNNLEHPRLGLTVAKKHLKRAHERNRIKRLVRESFRLSQHRLPAYDFVFVAKNGIGKLDNSAFAQILEKLWQRHIRLAQKS</sequence>
<keyword id="KW-0255">Endonuclease</keyword>
<keyword id="KW-0378">Hydrolase</keyword>
<keyword id="KW-0540">Nuclease</keyword>
<keyword id="KW-0694">RNA-binding</keyword>
<keyword id="KW-0819">tRNA processing</keyword>
<comment type="function">
    <text evidence="1">RNaseP catalyzes the removal of the 5'-leader sequence from pre-tRNA to produce the mature 5'-terminus. It can also cleave other RNA substrates such as 4.5S RNA. The protein component plays an auxiliary but essential role in vivo by binding to the 5'-leader sequence and broadening the substrate specificity of the ribozyme.</text>
</comment>
<comment type="catalytic activity">
    <reaction evidence="1">
        <text>Endonucleolytic cleavage of RNA, removing 5'-extranucleotides from tRNA precursor.</text>
        <dbReference type="EC" id="3.1.26.5"/>
    </reaction>
</comment>
<comment type="subunit">
    <text evidence="1">Consists of a catalytic RNA component (M1 or rnpB) and a protein subunit.</text>
</comment>
<comment type="similarity">
    <text evidence="1">Belongs to the RnpA family.</text>
</comment>
<reference key="1">
    <citation type="journal article" date="2007" name="Genome Biol.">
        <title>Characterization and modeling of the Haemophilus influenzae core and supragenomes based on the complete genomic sequences of Rd and 12 clinical nontypeable strains.</title>
        <authorList>
            <person name="Hogg J.S."/>
            <person name="Hu F.Z."/>
            <person name="Janto B."/>
            <person name="Boissy R."/>
            <person name="Hayes J."/>
            <person name="Keefe R."/>
            <person name="Post J.C."/>
            <person name="Ehrlich G.D."/>
        </authorList>
    </citation>
    <scope>NUCLEOTIDE SEQUENCE [LARGE SCALE GENOMIC DNA]</scope>
    <source>
        <strain>PittGG</strain>
    </source>
</reference>
<protein>
    <recommendedName>
        <fullName evidence="1">Ribonuclease P protein component</fullName>
        <shortName evidence="1">RNase P protein</shortName>
        <shortName evidence="1">RNaseP protein</shortName>
        <ecNumber evidence="1">3.1.26.5</ecNumber>
    </recommendedName>
    <alternativeName>
        <fullName evidence="1">Protein C5</fullName>
    </alternativeName>
</protein>
<evidence type="ECO:0000255" key="1">
    <source>
        <dbReference type="HAMAP-Rule" id="MF_00227"/>
    </source>
</evidence>
<proteinExistence type="inferred from homology"/>
<organism>
    <name type="scientific">Haemophilus influenzae (strain PittGG)</name>
    <dbReference type="NCBI Taxonomy" id="374931"/>
    <lineage>
        <taxon>Bacteria</taxon>
        <taxon>Pseudomonadati</taxon>
        <taxon>Pseudomonadota</taxon>
        <taxon>Gammaproteobacteria</taxon>
        <taxon>Pasteurellales</taxon>
        <taxon>Pasteurellaceae</taxon>
        <taxon>Haemophilus</taxon>
    </lineage>
</organism>
<dbReference type="EC" id="3.1.26.5" evidence="1"/>
<dbReference type="EMBL" id="CP000672">
    <property type="protein sequence ID" value="ABR00539.1"/>
    <property type="molecule type" value="Genomic_DNA"/>
</dbReference>
<dbReference type="SMR" id="A5UID3"/>
<dbReference type="KEGG" id="hiq:CGSHiGG_08595"/>
<dbReference type="HOGENOM" id="CLU_117179_11_0_6"/>
<dbReference type="Proteomes" id="UP000001990">
    <property type="component" value="Chromosome"/>
</dbReference>
<dbReference type="GO" id="GO:0030677">
    <property type="term" value="C:ribonuclease P complex"/>
    <property type="evidence" value="ECO:0007669"/>
    <property type="project" value="TreeGrafter"/>
</dbReference>
<dbReference type="GO" id="GO:0042781">
    <property type="term" value="F:3'-tRNA processing endoribonuclease activity"/>
    <property type="evidence" value="ECO:0007669"/>
    <property type="project" value="TreeGrafter"/>
</dbReference>
<dbReference type="GO" id="GO:0004526">
    <property type="term" value="F:ribonuclease P activity"/>
    <property type="evidence" value="ECO:0007669"/>
    <property type="project" value="UniProtKB-UniRule"/>
</dbReference>
<dbReference type="GO" id="GO:0000049">
    <property type="term" value="F:tRNA binding"/>
    <property type="evidence" value="ECO:0007669"/>
    <property type="project" value="UniProtKB-UniRule"/>
</dbReference>
<dbReference type="GO" id="GO:0001682">
    <property type="term" value="P:tRNA 5'-leader removal"/>
    <property type="evidence" value="ECO:0007669"/>
    <property type="project" value="UniProtKB-UniRule"/>
</dbReference>
<dbReference type="FunFam" id="3.30.230.10:FF:000016">
    <property type="entry name" value="Ribonuclease P protein component"/>
    <property type="match status" value="1"/>
</dbReference>
<dbReference type="Gene3D" id="3.30.230.10">
    <property type="match status" value="1"/>
</dbReference>
<dbReference type="HAMAP" id="MF_00227">
    <property type="entry name" value="RNase_P"/>
    <property type="match status" value="1"/>
</dbReference>
<dbReference type="InterPro" id="IPR020568">
    <property type="entry name" value="Ribosomal_Su5_D2-typ_SF"/>
</dbReference>
<dbReference type="InterPro" id="IPR014721">
    <property type="entry name" value="Ribsml_uS5_D2-typ_fold_subgr"/>
</dbReference>
<dbReference type="InterPro" id="IPR000100">
    <property type="entry name" value="RNase_P"/>
</dbReference>
<dbReference type="InterPro" id="IPR020539">
    <property type="entry name" value="RNase_P_CS"/>
</dbReference>
<dbReference type="NCBIfam" id="TIGR00188">
    <property type="entry name" value="rnpA"/>
    <property type="match status" value="1"/>
</dbReference>
<dbReference type="PANTHER" id="PTHR33992">
    <property type="entry name" value="RIBONUCLEASE P PROTEIN COMPONENT"/>
    <property type="match status" value="1"/>
</dbReference>
<dbReference type="PANTHER" id="PTHR33992:SF1">
    <property type="entry name" value="RIBONUCLEASE P PROTEIN COMPONENT"/>
    <property type="match status" value="1"/>
</dbReference>
<dbReference type="Pfam" id="PF00825">
    <property type="entry name" value="Ribonuclease_P"/>
    <property type="match status" value="1"/>
</dbReference>
<dbReference type="SUPFAM" id="SSF54211">
    <property type="entry name" value="Ribosomal protein S5 domain 2-like"/>
    <property type="match status" value="1"/>
</dbReference>
<dbReference type="PROSITE" id="PS00648">
    <property type="entry name" value="RIBONUCLEASE_P"/>
    <property type="match status" value="1"/>
</dbReference>
<name>RNPA_HAEIG</name>